<accession>O53778</accession>
<accession>L0T5S8</accession>
<proteinExistence type="evidence at protein level"/>
<sequence length="71" mass="7605">MDKTTVYLPDELKAAVKRAARQRGVSEAQVIRESIRAAVGGAKPPPRGGLYAGSEPIARRVDELLAGFGER</sequence>
<protein>
    <recommendedName>
        <fullName>Antitoxin VapB26</fullName>
    </recommendedName>
</protein>
<gene>
    <name type="primary">vapB26</name>
    <name type="ordered locus">Rv0581</name>
</gene>
<organism>
    <name type="scientific">Mycobacterium tuberculosis (strain ATCC 25618 / H37Rv)</name>
    <dbReference type="NCBI Taxonomy" id="83332"/>
    <lineage>
        <taxon>Bacteria</taxon>
        <taxon>Bacillati</taxon>
        <taxon>Actinomycetota</taxon>
        <taxon>Actinomycetes</taxon>
        <taxon>Mycobacteriales</taxon>
        <taxon>Mycobacteriaceae</taxon>
        <taxon>Mycobacterium</taxon>
        <taxon>Mycobacterium tuberculosis complex</taxon>
    </lineage>
</organism>
<name>VPB26_MYCTU</name>
<evidence type="ECO:0000269" key="1">
    <source>
    </source>
</evidence>
<evidence type="ECO:0007829" key="2">
    <source>
        <dbReference type="PDB" id="5X3T"/>
    </source>
</evidence>
<feature type="chain" id="PRO_0000408071" description="Antitoxin VapB26">
    <location>
        <begin position="1"/>
        <end position="71"/>
    </location>
</feature>
<feature type="strand" evidence="2">
    <location>
        <begin position="2"/>
        <end position="6"/>
    </location>
</feature>
<feature type="helix" evidence="2">
    <location>
        <begin position="10"/>
        <end position="23"/>
    </location>
</feature>
<feature type="helix" evidence="2">
    <location>
        <begin position="27"/>
        <end position="39"/>
    </location>
</feature>
<feature type="helix" evidence="2">
    <location>
        <begin position="61"/>
        <end position="64"/>
    </location>
</feature>
<feature type="turn" evidence="2">
    <location>
        <begin position="65"/>
        <end position="69"/>
    </location>
</feature>
<keyword id="KW-0002">3D-structure</keyword>
<keyword id="KW-1185">Reference proteome</keyword>
<keyword id="KW-1277">Toxin-antitoxin system</keyword>
<dbReference type="EMBL" id="AL123456">
    <property type="protein sequence ID" value="CCP43319.1"/>
    <property type="molecule type" value="Genomic_DNA"/>
</dbReference>
<dbReference type="PIR" id="D70934">
    <property type="entry name" value="D70934"/>
</dbReference>
<dbReference type="RefSeq" id="NP_215095.1">
    <property type="nucleotide sequence ID" value="NC_000962.3"/>
</dbReference>
<dbReference type="RefSeq" id="WP_003403039.1">
    <property type="nucleotide sequence ID" value="NZ_NVQJ01000033.1"/>
</dbReference>
<dbReference type="PDB" id="5X3T">
    <property type="method" value="X-ray"/>
    <property type="resolution" value="2.65 A"/>
    <property type="chains" value="A/C/E/G=1-71"/>
</dbReference>
<dbReference type="PDBsum" id="5X3T"/>
<dbReference type="SMR" id="O53778"/>
<dbReference type="STRING" id="83332.Rv0581"/>
<dbReference type="PaxDb" id="83332-Rv0581"/>
<dbReference type="GeneID" id="887739"/>
<dbReference type="KEGG" id="mtu:Rv0581"/>
<dbReference type="KEGG" id="mtv:RVBD_0581"/>
<dbReference type="TubercuList" id="Rv0581"/>
<dbReference type="eggNOG" id="ENOG5032NDN">
    <property type="taxonomic scope" value="Bacteria"/>
</dbReference>
<dbReference type="InParanoid" id="O53778"/>
<dbReference type="OrthoDB" id="3542100at2"/>
<dbReference type="Proteomes" id="UP000001584">
    <property type="component" value="Chromosome"/>
</dbReference>
<dbReference type="GO" id="GO:0045927">
    <property type="term" value="P:positive regulation of growth"/>
    <property type="evidence" value="ECO:0000315"/>
    <property type="project" value="MTBBASE"/>
</dbReference>
<dbReference type="GO" id="GO:0006355">
    <property type="term" value="P:regulation of DNA-templated transcription"/>
    <property type="evidence" value="ECO:0007669"/>
    <property type="project" value="InterPro"/>
</dbReference>
<dbReference type="CDD" id="cd21631">
    <property type="entry name" value="RHH_CopG_NikR-like"/>
    <property type="match status" value="1"/>
</dbReference>
<dbReference type="InterPro" id="IPR002145">
    <property type="entry name" value="CopG"/>
</dbReference>
<dbReference type="InterPro" id="IPR010985">
    <property type="entry name" value="Ribbon_hlx_hlx"/>
</dbReference>
<dbReference type="Pfam" id="PF01402">
    <property type="entry name" value="RHH_1"/>
    <property type="match status" value="1"/>
</dbReference>
<dbReference type="SUPFAM" id="SSF47598">
    <property type="entry name" value="Ribbon-helix-helix"/>
    <property type="match status" value="1"/>
</dbReference>
<comment type="function">
    <text evidence="1">Antitoxin component of a type II toxin-antitoxin (TA) system. Upon expression in M.smegmatis neutralizes the effect of cognate toxin VapC26.</text>
</comment>
<reference key="1">
    <citation type="journal article" date="1998" name="Nature">
        <title>Deciphering the biology of Mycobacterium tuberculosis from the complete genome sequence.</title>
        <authorList>
            <person name="Cole S.T."/>
            <person name="Brosch R."/>
            <person name="Parkhill J."/>
            <person name="Garnier T."/>
            <person name="Churcher C.M."/>
            <person name="Harris D.E."/>
            <person name="Gordon S.V."/>
            <person name="Eiglmeier K."/>
            <person name="Gas S."/>
            <person name="Barry C.E. III"/>
            <person name="Tekaia F."/>
            <person name="Badcock K."/>
            <person name="Basham D."/>
            <person name="Brown D."/>
            <person name="Chillingworth T."/>
            <person name="Connor R."/>
            <person name="Davies R.M."/>
            <person name="Devlin K."/>
            <person name="Feltwell T."/>
            <person name="Gentles S."/>
            <person name="Hamlin N."/>
            <person name="Holroyd S."/>
            <person name="Hornsby T."/>
            <person name="Jagels K."/>
            <person name="Krogh A."/>
            <person name="McLean J."/>
            <person name="Moule S."/>
            <person name="Murphy L.D."/>
            <person name="Oliver S."/>
            <person name="Osborne J."/>
            <person name="Quail M.A."/>
            <person name="Rajandream M.A."/>
            <person name="Rogers J."/>
            <person name="Rutter S."/>
            <person name="Seeger K."/>
            <person name="Skelton S."/>
            <person name="Squares S."/>
            <person name="Squares R."/>
            <person name="Sulston J.E."/>
            <person name="Taylor K."/>
            <person name="Whitehead S."/>
            <person name="Barrell B.G."/>
        </authorList>
    </citation>
    <scope>NUCLEOTIDE SEQUENCE [LARGE SCALE GENOMIC DNA]</scope>
    <source>
        <strain>ATCC 25618 / H37Rv</strain>
    </source>
</reference>
<reference key="2">
    <citation type="journal article" date="2009" name="PLoS Genet.">
        <title>Comprehensive functional analysis of Mycobacterium tuberculosis toxin-antitoxin systems: implications for pathogenesis, stress responses, and evolution.</title>
        <authorList>
            <person name="Ramage H.R."/>
            <person name="Connolly L.E."/>
            <person name="Cox J.S."/>
        </authorList>
    </citation>
    <scope>EXPRESSION IN M.SMEGMATIS</scope>
    <scope>FUNCTION AS AN ANTITOXIN</scope>
    <source>
        <strain>ATCC 35801 / TMC 107 / Erdman</strain>
    </source>
</reference>
<reference key="3">
    <citation type="journal article" date="2011" name="Mol. Cell. Proteomics">
        <title>Proteogenomic analysis of Mycobacterium tuberculosis by high resolution mass spectrometry.</title>
        <authorList>
            <person name="Kelkar D.S."/>
            <person name="Kumar D."/>
            <person name="Kumar P."/>
            <person name="Balakrishnan L."/>
            <person name="Muthusamy B."/>
            <person name="Yadav A.K."/>
            <person name="Shrivastava P."/>
            <person name="Marimuthu A."/>
            <person name="Anand S."/>
            <person name="Sundaram H."/>
            <person name="Kingsbury R."/>
            <person name="Harsha H.C."/>
            <person name="Nair B."/>
            <person name="Prasad T.S."/>
            <person name="Chauhan D.S."/>
            <person name="Katoch K."/>
            <person name="Katoch V.M."/>
            <person name="Kumar P."/>
            <person name="Chaerkady R."/>
            <person name="Ramachandran S."/>
            <person name="Dash D."/>
            <person name="Pandey A."/>
        </authorList>
    </citation>
    <scope>IDENTIFICATION BY MASS SPECTROMETRY [LARGE SCALE ANALYSIS]</scope>
    <source>
        <strain>ATCC 25618 / H37Rv</strain>
    </source>
</reference>